<evidence type="ECO:0000255" key="1">
    <source>
        <dbReference type="HAMAP-Rule" id="MF_00204"/>
    </source>
</evidence>
<gene>
    <name evidence="1" type="primary">uvrB</name>
    <name type="ordered locus">OB2488</name>
</gene>
<proteinExistence type="inferred from homology"/>
<organism>
    <name type="scientific">Oceanobacillus iheyensis (strain DSM 14371 / CIP 107618 / JCM 11309 / KCTC 3954 / HTE831)</name>
    <dbReference type="NCBI Taxonomy" id="221109"/>
    <lineage>
        <taxon>Bacteria</taxon>
        <taxon>Bacillati</taxon>
        <taxon>Bacillota</taxon>
        <taxon>Bacilli</taxon>
        <taxon>Bacillales</taxon>
        <taxon>Bacillaceae</taxon>
        <taxon>Oceanobacillus</taxon>
    </lineage>
</organism>
<sequence length="660" mass="76037">MKEKFELVSAYDPAGDQPNAINEITKKVLAGQRHQTLLGATGTGKTFTMSNVVKEINRPTLVIAHNKTLAGQLYSEFKEFFPNNAVEYFVSYYDYYQPEAYVPSTDTFIEKDASINDEIDKLRHSATSALFERQDVLIVASVSCIYGLGNPEEYKSQVLSLRMGMEKDRDQLLRDLVEVQYARNDINFQRGTFRVRGDSVEIIPASHEEYCIRVEFFGDEIDRIREVDALTGEIIGDREHVAIFPASHFVTREEKMKIAIQNIEKELEEQLKEMRDNGKLLEAQRLEQRTNYDLEMMREMGFCSGIENYSRHLTLRGPGAVPYTLLDFFPEDFLVIIDESHVTLPQIRGMFNGDQARKQVLVDHGFRLPSAMDNRPLRFQEFEDKTKQLVYVSATPGPYELEHSPEMTEQIIRPTGLLDPKVEVRPIEGQIDNLIEEIRIRMEKNERVLITTLTKKMSEDLTDYLKEIGMKVAYLHSEIKTLERIEVIRDLRVGKFDVLVGINLLREGLDIPEVSLVSILDADKEGFLRSERSLIQTMGRAARNENGKVIMYADKMTDSMKKAIDETNRRRTIQTEYNEQHGITPKTIRKEVRDVIKATTAAEETESYEPKTKQINKMTKKEREKVIEQMENEMKQAAKDLDFEKAAELRDVILELKAEG</sequence>
<reference key="1">
    <citation type="journal article" date="2002" name="Nucleic Acids Res.">
        <title>Genome sequence of Oceanobacillus iheyensis isolated from the Iheya Ridge and its unexpected adaptive capabilities to extreme environments.</title>
        <authorList>
            <person name="Takami H."/>
            <person name="Takaki Y."/>
            <person name="Uchiyama I."/>
        </authorList>
    </citation>
    <scope>NUCLEOTIDE SEQUENCE [LARGE SCALE GENOMIC DNA]</scope>
    <source>
        <strain>DSM 14371 / CIP 107618 / JCM 11309 / KCTC 3954 / HTE831</strain>
    </source>
</reference>
<comment type="function">
    <text evidence="1">The UvrABC repair system catalyzes the recognition and processing of DNA lesions. A damage recognition complex composed of 2 UvrA and 2 UvrB subunits scans DNA for abnormalities. Upon binding of the UvrA(2)B(2) complex to a putative damaged site, the DNA wraps around one UvrB monomer. DNA wrap is dependent on ATP binding by UvrB and probably causes local melting of the DNA helix, facilitating insertion of UvrB beta-hairpin between the DNA strands. Then UvrB probes one DNA strand for the presence of a lesion. If a lesion is found the UvrA subunits dissociate and the UvrB-DNA preincision complex is formed. This complex is subsequently bound by UvrC and the second UvrB is released. If no lesion is found, the DNA wraps around the other UvrB subunit that will check the other stand for damage.</text>
</comment>
<comment type="subunit">
    <text evidence="1">Forms a heterotetramer with UvrA during the search for lesions. Interacts with UvrC in an incision complex.</text>
</comment>
<comment type="subcellular location">
    <subcellularLocation>
        <location evidence="1">Cytoplasm</location>
    </subcellularLocation>
</comment>
<comment type="domain">
    <text evidence="1">The beta-hairpin motif is involved in DNA binding.</text>
</comment>
<comment type="similarity">
    <text evidence="1">Belongs to the UvrB family.</text>
</comment>
<name>UVRB_OCEIH</name>
<protein>
    <recommendedName>
        <fullName evidence="1">UvrABC system protein B</fullName>
        <shortName evidence="1">Protein UvrB</shortName>
    </recommendedName>
    <alternativeName>
        <fullName evidence="1">Excinuclease ABC subunit B</fullName>
    </alternativeName>
</protein>
<feature type="chain" id="PRO_0000227335" description="UvrABC system protein B">
    <location>
        <begin position="1"/>
        <end position="660"/>
    </location>
</feature>
<feature type="domain" description="Helicase ATP-binding" evidence="1">
    <location>
        <begin position="26"/>
        <end position="414"/>
    </location>
</feature>
<feature type="domain" description="Helicase C-terminal" evidence="1">
    <location>
        <begin position="430"/>
        <end position="596"/>
    </location>
</feature>
<feature type="domain" description="UVR" evidence="1">
    <location>
        <begin position="624"/>
        <end position="659"/>
    </location>
</feature>
<feature type="short sequence motif" description="Beta-hairpin">
    <location>
        <begin position="92"/>
        <end position="115"/>
    </location>
</feature>
<feature type="binding site" evidence="1">
    <location>
        <begin position="39"/>
        <end position="46"/>
    </location>
    <ligand>
        <name>ATP</name>
        <dbReference type="ChEBI" id="CHEBI:30616"/>
    </ligand>
</feature>
<accession>Q8ENJ5</accession>
<dbReference type="EMBL" id="BA000028">
    <property type="protein sequence ID" value="BAC14444.1"/>
    <property type="molecule type" value="Genomic_DNA"/>
</dbReference>
<dbReference type="RefSeq" id="WP_011066881.1">
    <property type="nucleotide sequence ID" value="NC_004193.1"/>
</dbReference>
<dbReference type="SMR" id="Q8ENJ5"/>
<dbReference type="STRING" id="221109.gene:10734740"/>
<dbReference type="KEGG" id="oih:OB2488"/>
<dbReference type="eggNOG" id="COG0556">
    <property type="taxonomic scope" value="Bacteria"/>
</dbReference>
<dbReference type="HOGENOM" id="CLU_009621_2_1_9"/>
<dbReference type="OrthoDB" id="9806651at2"/>
<dbReference type="PhylomeDB" id="Q8ENJ5"/>
<dbReference type="Proteomes" id="UP000000822">
    <property type="component" value="Chromosome"/>
</dbReference>
<dbReference type="GO" id="GO:0005737">
    <property type="term" value="C:cytoplasm"/>
    <property type="evidence" value="ECO:0007669"/>
    <property type="project" value="UniProtKB-SubCell"/>
</dbReference>
<dbReference type="GO" id="GO:0009380">
    <property type="term" value="C:excinuclease repair complex"/>
    <property type="evidence" value="ECO:0007669"/>
    <property type="project" value="InterPro"/>
</dbReference>
<dbReference type="GO" id="GO:0005524">
    <property type="term" value="F:ATP binding"/>
    <property type="evidence" value="ECO:0007669"/>
    <property type="project" value="UniProtKB-UniRule"/>
</dbReference>
<dbReference type="GO" id="GO:0016887">
    <property type="term" value="F:ATP hydrolysis activity"/>
    <property type="evidence" value="ECO:0007669"/>
    <property type="project" value="InterPro"/>
</dbReference>
<dbReference type="GO" id="GO:0003677">
    <property type="term" value="F:DNA binding"/>
    <property type="evidence" value="ECO:0007669"/>
    <property type="project" value="UniProtKB-UniRule"/>
</dbReference>
<dbReference type="GO" id="GO:0009381">
    <property type="term" value="F:excinuclease ABC activity"/>
    <property type="evidence" value="ECO:0007669"/>
    <property type="project" value="UniProtKB-UniRule"/>
</dbReference>
<dbReference type="GO" id="GO:0006289">
    <property type="term" value="P:nucleotide-excision repair"/>
    <property type="evidence" value="ECO:0007669"/>
    <property type="project" value="UniProtKB-UniRule"/>
</dbReference>
<dbReference type="GO" id="GO:0009432">
    <property type="term" value="P:SOS response"/>
    <property type="evidence" value="ECO:0007669"/>
    <property type="project" value="UniProtKB-UniRule"/>
</dbReference>
<dbReference type="CDD" id="cd17916">
    <property type="entry name" value="DEXHc_UvrB"/>
    <property type="match status" value="1"/>
</dbReference>
<dbReference type="CDD" id="cd18790">
    <property type="entry name" value="SF2_C_UvrB"/>
    <property type="match status" value="1"/>
</dbReference>
<dbReference type="Gene3D" id="3.40.50.300">
    <property type="entry name" value="P-loop containing nucleotide triphosphate hydrolases"/>
    <property type="match status" value="3"/>
</dbReference>
<dbReference type="Gene3D" id="4.10.860.10">
    <property type="entry name" value="UVR domain"/>
    <property type="match status" value="1"/>
</dbReference>
<dbReference type="HAMAP" id="MF_00204">
    <property type="entry name" value="UvrB"/>
    <property type="match status" value="1"/>
</dbReference>
<dbReference type="InterPro" id="IPR006935">
    <property type="entry name" value="Helicase/UvrB_N"/>
</dbReference>
<dbReference type="InterPro" id="IPR014001">
    <property type="entry name" value="Helicase_ATP-bd"/>
</dbReference>
<dbReference type="InterPro" id="IPR001650">
    <property type="entry name" value="Helicase_C-like"/>
</dbReference>
<dbReference type="InterPro" id="IPR027417">
    <property type="entry name" value="P-loop_NTPase"/>
</dbReference>
<dbReference type="InterPro" id="IPR001943">
    <property type="entry name" value="UVR_dom"/>
</dbReference>
<dbReference type="InterPro" id="IPR036876">
    <property type="entry name" value="UVR_dom_sf"/>
</dbReference>
<dbReference type="InterPro" id="IPR004807">
    <property type="entry name" value="UvrB"/>
</dbReference>
<dbReference type="InterPro" id="IPR041471">
    <property type="entry name" value="UvrB_inter"/>
</dbReference>
<dbReference type="InterPro" id="IPR024759">
    <property type="entry name" value="UvrB_YAD/RRR_dom"/>
</dbReference>
<dbReference type="NCBIfam" id="NF003673">
    <property type="entry name" value="PRK05298.1"/>
    <property type="match status" value="1"/>
</dbReference>
<dbReference type="NCBIfam" id="TIGR00631">
    <property type="entry name" value="uvrb"/>
    <property type="match status" value="1"/>
</dbReference>
<dbReference type="PANTHER" id="PTHR24029">
    <property type="entry name" value="UVRABC SYSTEM PROTEIN B"/>
    <property type="match status" value="1"/>
</dbReference>
<dbReference type="PANTHER" id="PTHR24029:SF0">
    <property type="entry name" value="UVRABC SYSTEM PROTEIN B"/>
    <property type="match status" value="1"/>
</dbReference>
<dbReference type="Pfam" id="PF00271">
    <property type="entry name" value="Helicase_C"/>
    <property type="match status" value="1"/>
</dbReference>
<dbReference type="Pfam" id="PF04851">
    <property type="entry name" value="ResIII"/>
    <property type="match status" value="1"/>
</dbReference>
<dbReference type="Pfam" id="PF02151">
    <property type="entry name" value="UVR"/>
    <property type="match status" value="1"/>
</dbReference>
<dbReference type="Pfam" id="PF12344">
    <property type="entry name" value="UvrB"/>
    <property type="match status" value="1"/>
</dbReference>
<dbReference type="Pfam" id="PF17757">
    <property type="entry name" value="UvrB_inter"/>
    <property type="match status" value="1"/>
</dbReference>
<dbReference type="SMART" id="SM00487">
    <property type="entry name" value="DEXDc"/>
    <property type="match status" value="1"/>
</dbReference>
<dbReference type="SMART" id="SM00490">
    <property type="entry name" value="HELICc"/>
    <property type="match status" value="1"/>
</dbReference>
<dbReference type="SUPFAM" id="SSF46600">
    <property type="entry name" value="C-terminal UvrC-binding domain of UvrB"/>
    <property type="match status" value="1"/>
</dbReference>
<dbReference type="SUPFAM" id="SSF52540">
    <property type="entry name" value="P-loop containing nucleoside triphosphate hydrolases"/>
    <property type="match status" value="2"/>
</dbReference>
<dbReference type="PROSITE" id="PS51192">
    <property type="entry name" value="HELICASE_ATP_BIND_1"/>
    <property type="match status" value="1"/>
</dbReference>
<dbReference type="PROSITE" id="PS51194">
    <property type="entry name" value="HELICASE_CTER"/>
    <property type="match status" value="1"/>
</dbReference>
<dbReference type="PROSITE" id="PS50151">
    <property type="entry name" value="UVR"/>
    <property type="match status" value="1"/>
</dbReference>
<keyword id="KW-0067">ATP-binding</keyword>
<keyword id="KW-0963">Cytoplasm</keyword>
<keyword id="KW-0227">DNA damage</keyword>
<keyword id="KW-0228">DNA excision</keyword>
<keyword id="KW-0234">DNA repair</keyword>
<keyword id="KW-0267">Excision nuclease</keyword>
<keyword id="KW-0547">Nucleotide-binding</keyword>
<keyword id="KW-1185">Reference proteome</keyword>
<keyword id="KW-0742">SOS response</keyword>